<sequence>MIPLTHGLILAAILFVLGLTGLVIRRNLLFMLIGLEIMINASALAFVVAGSYWGQPDGQVMYILAISLAAAEASIGLALLLQLHRRRQNLNIDSVSELRG</sequence>
<feature type="chain" id="PRO_0000390037" description="NADH-quinone oxidoreductase subunit K">
    <location>
        <begin position="1"/>
        <end position="100"/>
    </location>
</feature>
<feature type="transmembrane region" description="Helical" evidence="1">
    <location>
        <begin position="4"/>
        <end position="24"/>
    </location>
</feature>
<feature type="transmembrane region" description="Helical" evidence="1">
    <location>
        <begin position="28"/>
        <end position="48"/>
    </location>
</feature>
<feature type="transmembrane region" description="Helical" evidence="1">
    <location>
        <begin position="60"/>
        <end position="80"/>
    </location>
</feature>
<proteinExistence type="inferred from homology"/>
<organism>
    <name type="scientific">Enterobacter sp. (strain 638)</name>
    <dbReference type="NCBI Taxonomy" id="399742"/>
    <lineage>
        <taxon>Bacteria</taxon>
        <taxon>Pseudomonadati</taxon>
        <taxon>Pseudomonadota</taxon>
        <taxon>Gammaproteobacteria</taxon>
        <taxon>Enterobacterales</taxon>
        <taxon>Enterobacteriaceae</taxon>
        <taxon>Enterobacter</taxon>
    </lineage>
</organism>
<dbReference type="EC" id="7.1.1.-" evidence="1"/>
<dbReference type="EMBL" id="CP000653">
    <property type="protein sequence ID" value="ABP61488.1"/>
    <property type="molecule type" value="Genomic_DNA"/>
</dbReference>
<dbReference type="RefSeq" id="WP_015959821.1">
    <property type="nucleotide sequence ID" value="NC_009436.1"/>
</dbReference>
<dbReference type="SMR" id="A4WCQ8"/>
<dbReference type="STRING" id="399742.Ent638_2823"/>
<dbReference type="GeneID" id="93305790"/>
<dbReference type="KEGG" id="ent:Ent638_2823"/>
<dbReference type="eggNOG" id="COG0713">
    <property type="taxonomic scope" value="Bacteria"/>
</dbReference>
<dbReference type="HOGENOM" id="CLU_144724_0_1_6"/>
<dbReference type="OrthoDB" id="9801357at2"/>
<dbReference type="Proteomes" id="UP000000230">
    <property type="component" value="Chromosome"/>
</dbReference>
<dbReference type="GO" id="GO:0030964">
    <property type="term" value="C:NADH dehydrogenase complex"/>
    <property type="evidence" value="ECO:0007669"/>
    <property type="project" value="TreeGrafter"/>
</dbReference>
<dbReference type="GO" id="GO:0005886">
    <property type="term" value="C:plasma membrane"/>
    <property type="evidence" value="ECO:0007669"/>
    <property type="project" value="UniProtKB-SubCell"/>
</dbReference>
<dbReference type="GO" id="GO:0050136">
    <property type="term" value="F:NADH:ubiquinone reductase (non-electrogenic) activity"/>
    <property type="evidence" value="ECO:0007669"/>
    <property type="project" value="UniProtKB-UniRule"/>
</dbReference>
<dbReference type="GO" id="GO:0048038">
    <property type="term" value="F:quinone binding"/>
    <property type="evidence" value="ECO:0007669"/>
    <property type="project" value="UniProtKB-KW"/>
</dbReference>
<dbReference type="GO" id="GO:0042773">
    <property type="term" value="P:ATP synthesis coupled electron transport"/>
    <property type="evidence" value="ECO:0007669"/>
    <property type="project" value="InterPro"/>
</dbReference>
<dbReference type="FunFam" id="1.10.287.3510:FF:000001">
    <property type="entry name" value="NADH-quinone oxidoreductase subunit K"/>
    <property type="match status" value="1"/>
</dbReference>
<dbReference type="Gene3D" id="1.10.287.3510">
    <property type="match status" value="1"/>
</dbReference>
<dbReference type="HAMAP" id="MF_01456">
    <property type="entry name" value="NDH1_NuoK"/>
    <property type="match status" value="1"/>
</dbReference>
<dbReference type="InterPro" id="IPR001133">
    <property type="entry name" value="NADH_UbQ_OxRdtase_chain4L/K"/>
</dbReference>
<dbReference type="InterPro" id="IPR039428">
    <property type="entry name" value="NUOK/Mnh_C1-like"/>
</dbReference>
<dbReference type="NCBIfam" id="NF004319">
    <property type="entry name" value="PRK05715.1-1"/>
    <property type="match status" value="1"/>
</dbReference>
<dbReference type="NCBIfam" id="NF004320">
    <property type="entry name" value="PRK05715.1-2"/>
    <property type="match status" value="1"/>
</dbReference>
<dbReference type="PANTHER" id="PTHR11434:SF16">
    <property type="entry name" value="NADH-UBIQUINONE OXIDOREDUCTASE CHAIN 4L"/>
    <property type="match status" value="1"/>
</dbReference>
<dbReference type="PANTHER" id="PTHR11434">
    <property type="entry name" value="NADH-UBIQUINONE OXIDOREDUCTASE SUBUNIT ND4L"/>
    <property type="match status" value="1"/>
</dbReference>
<dbReference type="Pfam" id="PF00420">
    <property type="entry name" value="Oxidored_q2"/>
    <property type="match status" value="1"/>
</dbReference>
<evidence type="ECO:0000255" key="1">
    <source>
        <dbReference type="HAMAP-Rule" id="MF_01456"/>
    </source>
</evidence>
<accession>A4WCQ8</accession>
<keyword id="KW-0997">Cell inner membrane</keyword>
<keyword id="KW-1003">Cell membrane</keyword>
<keyword id="KW-0472">Membrane</keyword>
<keyword id="KW-0520">NAD</keyword>
<keyword id="KW-0874">Quinone</keyword>
<keyword id="KW-1278">Translocase</keyword>
<keyword id="KW-0812">Transmembrane</keyword>
<keyword id="KW-1133">Transmembrane helix</keyword>
<keyword id="KW-0813">Transport</keyword>
<keyword id="KW-0830">Ubiquinone</keyword>
<comment type="function">
    <text evidence="1">NDH-1 shuttles electrons from NADH, via FMN and iron-sulfur (Fe-S) centers, to quinones in the respiratory chain. The immediate electron acceptor for the enzyme in this species is believed to be ubiquinone. Couples the redox reaction to proton translocation (for every two electrons transferred, four hydrogen ions are translocated across the cytoplasmic membrane), and thus conserves the redox energy in a proton gradient.</text>
</comment>
<comment type="catalytic activity">
    <reaction evidence="1">
        <text>a quinone + NADH + 5 H(+)(in) = a quinol + NAD(+) + 4 H(+)(out)</text>
        <dbReference type="Rhea" id="RHEA:57888"/>
        <dbReference type="ChEBI" id="CHEBI:15378"/>
        <dbReference type="ChEBI" id="CHEBI:24646"/>
        <dbReference type="ChEBI" id="CHEBI:57540"/>
        <dbReference type="ChEBI" id="CHEBI:57945"/>
        <dbReference type="ChEBI" id="CHEBI:132124"/>
    </reaction>
</comment>
<comment type="subunit">
    <text evidence="1">NDH-1 is composed of 13 different subunits. Subunits NuoA, H, J, K, L, M, N constitute the membrane sector of the complex.</text>
</comment>
<comment type="subcellular location">
    <subcellularLocation>
        <location evidence="1">Cell inner membrane</location>
        <topology evidence="1">Multi-pass membrane protein</topology>
    </subcellularLocation>
</comment>
<comment type="similarity">
    <text evidence="1">Belongs to the complex I subunit 4L family.</text>
</comment>
<protein>
    <recommendedName>
        <fullName evidence="1">NADH-quinone oxidoreductase subunit K</fullName>
        <ecNumber evidence="1">7.1.1.-</ecNumber>
    </recommendedName>
    <alternativeName>
        <fullName evidence="1">NADH dehydrogenase I subunit K</fullName>
    </alternativeName>
    <alternativeName>
        <fullName evidence="1">NDH-1 subunit K</fullName>
    </alternativeName>
</protein>
<name>NUOK_ENT38</name>
<reference key="1">
    <citation type="journal article" date="2010" name="PLoS Genet.">
        <title>Genome sequence of the plant growth promoting endophytic bacterium Enterobacter sp. 638.</title>
        <authorList>
            <person name="Taghavi S."/>
            <person name="van der Lelie D."/>
            <person name="Hoffman A."/>
            <person name="Zhang Y.B."/>
            <person name="Walla M.D."/>
            <person name="Vangronsveld J."/>
            <person name="Newman L."/>
            <person name="Monchy S."/>
        </authorList>
    </citation>
    <scope>NUCLEOTIDE SEQUENCE [LARGE SCALE GENOMIC DNA]</scope>
    <source>
        <strain>638</strain>
    </source>
</reference>
<gene>
    <name evidence="1" type="primary">nuoK</name>
    <name type="ordered locus">Ent638_2823</name>
</gene>